<accession>B7J9T2</accession>
<organism>
    <name type="scientific">Acidithiobacillus ferrooxidans (strain ATCC 23270 / DSM 14882 / CIP 104768 / NCIMB 8455)</name>
    <name type="common">Ferrobacillus ferrooxidans (strain ATCC 23270)</name>
    <dbReference type="NCBI Taxonomy" id="243159"/>
    <lineage>
        <taxon>Bacteria</taxon>
        <taxon>Pseudomonadati</taxon>
        <taxon>Pseudomonadota</taxon>
        <taxon>Acidithiobacillia</taxon>
        <taxon>Acidithiobacillales</taxon>
        <taxon>Acidithiobacillaceae</taxon>
        <taxon>Acidithiobacillus</taxon>
    </lineage>
</organism>
<protein>
    <recommendedName>
        <fullName evidence="1">Probable Fe(2+)-trafficking protein</fullName>
    </recommendedName>
</protein>
<gene>
    <name type="ordered locus">AFE_2959</name>
</gene>
<comment type="function">
    <text evidence="1">Could be a mediator in iron transactions between iron acquisition and iron-requiring processes, such as synthesis and/or repair of Fe-S clusters in biosynthetic enzymes.</text>
</comment>
<comment type="similarity">
    <text evidence="1">Belongs to the Fe(2+)-trafficking protein family.</text>
</comment>
<sequence>MSRMVQCVKLGHEAEGLDRPPYPGALGARIYQEVSKEAWQGWLKHQTMLINEYRLSPIDPKSRTFLEKQMEAYFFGDGAQSPEGYVPPAPQDS</sequence>
<name>FETP_ACIF2</name>
<dbReference type="EMBL" id="CP001219">
    <property type="protein sequence ID" value="ACK80183.1"/>
    <property type="molecule type" value="Genomic_DNA"/>
</dbReference>
<dbReference type="RefSeq" id="WP_009564008.1">
    <property type="nucleotide sequence ID" value="NC_011761.1"/>
</dbReference>
<dbReference type="SMR" id="B7J9T2"/>
<dbReference type="STRING" id="243159.AFE_2959"/>
<dbReference type="PaxDb" id="243159-AFE_2959"/>
<dbReference type="GeneID" id="65281972"/>
<dbReference type="KEGG" id="afr:AFE_2959"/>
<dbReference type="eggNOG" id="COG2924">
    <property type="taxonomic scope" value="Bacteria"/>
</dbReference>
<dbReference type="HOGENOM" id="CLU_170994_0_0_6"/>
<dbReference type="Proteomes" id="UP000001362">
    <property type="component" value="Chromosome"/>
</dbReference>
<dbReference type="GO" id="GO:0005829">
    <property type="term" value="C:cytosol"/>
    <property type="evidence" value="ECO:0007669"/>
    <property type="project" value="TreeGrafter"/>
</dbReference>
<dbReference type="GO" id="GO:0005506">
    <property type="term" value="F:iron ion binding"/>
    <property type="evidence" value="ECO:0007669"/>
    <property type="project" value="UniProtKB-UniRule"/>
</dbReference>
<dbReference type="GO" id="GO:0034599">
    <property type="term" value="P:cellular response to oxidative stress"/>
    <property type="evidence" value="ECO:0007669"/>
    <property type="project" value="TreeGrafter"/>
</dbReference>
<dbReference type="FunFam" id="1.10.3880.10:FF:000001">
    <property type="entry name" value="Probable Fe(2+)-trafficking protein"/>
    <property type="match status" value="1"/>
</dbReference>
<dbReference type="Gene3D" id="1.10.3880.10">
    <property type="entry name" value="Fe(II) trafficking protein YggX"/>
    <property type="match status" value="1"/>
</dbReference>
<dbReference type="HAMAP" id="MF_00686">
    <property type="entry name" value="Fe_traffic_YggX"/>
    <property type="match status" value="1"/>
</dbReference>
<dbReference type="InterPro" id="IPR007457">
    <property type="entry name" value="Fe_traffick_prot_YggX"/>
</dbReference>
<dbReference type="InterPro" id="IPR036766">
    <property type="entry name" value="Fe_traffick_prot_YggX_sf"/>
</dbReference>
<dbReference type="NCBIfam" id="NF003817">
    <property type="entry name" value="PRK05408.1"/>
    <property type="match status" value="1"/>
</dbReference>
<dbReference type="PANTHER" id="PTHR36965">
    <property type="entry name" value="FE(2+)-TRAFFICKING PROTEIN-RELATED"/>
    <property type="match status" value="1"/>
</dbReference>
<dbReference type="PANTHER" id="PTHR36965:SF1">
    <property type="entry name" value="FE(2+)-TRAFFICKING PROTEIN-RELATED"/>
    <property type="match status" value="1"/>
</dbReference>
<dbReference type="Pfam" id="PF04362">
    <property type="entry name" value="Iron_traffic"/>
    <property type="match status" value="1"/>
</dbReference>
<dbReference type="PIRSF" id="PIRSF029827">
    <property type="entry name" value="Fe_traffic_YggX"/>
    <property type="match status" value="1"/>
</dbReference>
<dbReference type="SUPFAM" id="SSF111148">
    <property type="entry name" value="YggX-like"/>
    <property type="match status" value="1"/>
</dbReference>
<proteinExistence type="inferred from homology"/>
<feature type="chain" id="PRO_1000131821" description="Probable Fe(2+)-trafficking protein">
    <location>
        <begin position="1"/>
        <end position="93"/>
    </location>
</feature>
<evidence type="ECO:0000255" key="1">
    <source>
        <dbReference type="HAMAP-Rule" id="MF_00686"/>
    </source>
</evidence>
<keyword id="KW-0408">Iron</keyword>
<keyword id="KW-1185">Reference proteome</keyword>
<reference key="1">
    <citation type="journal article" date="2008" name="BMC Genomics">
        <title>Acidithiobacillus ferrooxidans metabolism: from genome sequence to industrial applications.</title>
        <authorList>
            <person name="Valdes J."/>
            <person name="Pedroso I."/>
            <person name="Quatrini R."/>
            <person name="Dodson R.J."/>
            <person name="Tettelin H."/>
            <person name="Blake R. II"/>
            <person name="Eisen J.A."/>
            <person name="Holmes D.S."/>
        </authorList>
    </citation>
    <scope>NUCLEOTIDE SEQUENCE [LARGE SCALE GENOMIC DNA]</scope>
    <source>
        <strain>ATCC 23270 / DSM 14882 / CIP 104768 / NCIMB 8455</strain>
    </source>
</reference>